<proteinExistence type="evidence at protein level"/>
<comment type="function">
    <text evidence="1 4">Self-assembles to form a helical, filamentous nucleocapsid (Probable) (PubMed:30135568). Together with capsid protein 2, wraps arounds the DNA and maintains it in an A-form (Probable) (PubMed:30135568). Capsid proteins probably maintain the DNA in A-form by non-specific desolvation and specific coordination of the DNA phosphate groups by positively charged residues (Probable) (PubMed:30135568). This certainly protects the viral DNA under conditions such as the extreme desiccation of its host (Probable).</text>
</comment>
<comment type="subunit">
    <text evidence="1 2">Heterodimer composed of major capsid protein VP4 and major capsid protein VP5.</text>
</comment>
<comment type="subcellular location">
    <subcellularLocation>
        <location evidence="2">Virion</location>
    </subcellularLocation>
</comment>
<comment type="domain">
    <text evidence="1 2">The N-terminus projects into a DNA groove.</text>
</comment>
<gene>
    <name evidence="5" type="ORF">SFV1gp23</name>
</gene>
<dbReference type="EMBL" id="MH447526">
    <property type="protein sequence ID" value="AXQ00105.1"/>
    <property type="molecule type" value="Genomic_DNA"/>
</dbReference>
<dbReference type="EMDB" id="EMD-7797"/>
<dbReference type="SMR" id="A0A346LU62"/>
<dbReference type="Proteomes" id="UP000263690">
    <property type="component" value="Genome"/>
</dbReference>
<dbReference type="GO" id="GO:0019029">
    <property type="term" value="C:helical viral capsid"/>
    <property type="evidence" value="ECO:0000314"/>
    <property type="project" value="UniProtKB"/>
</dbReference>
<dbReference type="GO" id="GO:0003677">
    <property type="term" value="F:DNA binding"/>
    <property type="evidence" value="ECO:0000314"/>
    <property type="project" value="UniProtKB"/>
</dbReference>
<dbReference type="Gene3D" id="1.20.58.800">
    <property type="match status" value="1"/>
</dbReference>
<name>CAPS1_SUFV1</name>
<keyword id="KW-1185">Reference proteome</keyword>
<keyword id="KW-0946">Virion</keyword>
<protein>
    <recommendedName>
        <fullName evidence="3">Major capsid protein VP4</fullName>
    </recommendedName>
</protein>
<sequence length="137" mass="15771">MPSRRTGITTEDAITKYSVKAKTEQTAYKNATKDMVVQAQNIMNFYSVVNQALIPWLNAHGVGGNLRILYRQLANEYVKVLNTKQSGEVIKRLKIALRHKYWLRGLDEAMLDEFMDYIDSLKSTTTNYIIFNMQSSK</sequence>
<accession>A0A346LU62</accession>
<feature type="chain" id="PRO_0000453807" description="Major capsid protein VP4">
    <location>
        <begin position="1"/>
        <end position="137"/>
    </location>
</feature>
<evidence type="ECO:0000269" key="1">
    <source>
    </source>
</evidence>
<evidence type="ECO:0000269" key="2">
    <source>
    </source>
</evidence>
<evidence type="ECO:0000303" key="3">
    <source>
    </source>
</evidence>
<evidence type="ECO:0000305" key="4">
    <source>
    </source>
</evidence>
<evidence type="ECO:0000312" key="5">
    <source>
        <dbReference type="EMBL" id="AXQ00105.1"/>
    </source>
</evidence>
<organismHost>
    <name type="scientific">Saccharolobus shibatae</name>
    <dbReference type="NCBI Taxonomy" id="2286"/>
</organismHost>
<reference key="1">
    <citation type="journal article" date="2018" name="Nat. Commun.">
        <title>Structural conservation in a membrane-enveloped filamentous virus infecting a hyperthermophilic acidophile.</title>
        <authorList>
            <person name="Liu Y."/>
            <person name="Osinski T."/>
            <person name="Wang F."/>
            <person name="Krupovic M."/>
            <person name="Schouten S."/>
            <person name="Kasson P."/>
            <person name="Prangishvili D."/>
            <person name="Egelman E.H."/>
        </authorList>
    </citation>
    <scope>NUCLEOTIDE SEQUENCE [LARGE SCALE GENOMIC DNA]</scope>
    <scope>SUBUNIT</scope>
    <scope>FUNCTION</scope>
    <scope>DOMAIN</scope>
    <source>
        <strain evidence="5">S48</strain>
    </source>
</reference>
<reference key="2">
    <citation type="journal article" date="2020" name="Proc. Natl. Acad. Sci. U.S.A.">
        <title>Structures of filamentous viruses infecting hyperthermophilic archaea explain DNA stabilization in extreme environments.</title>
        <authorList>
            <person name="Wang F."/>
            <person name="Baquero D.P."/>
            <person name="Beltran L.C."/>
            <person name="Su Z."/>
            <person name="Osinski T."/>
            <person name="Zheng W."/>
            <person name="Prangishvili D."/>
            <person name="Krupovic M."/>
            <person name="Egelman E.H."/>
        </authorList>
    </citation>
    <scope>SUBUNIT</scope>
    <scope>FUNCTION</scope>
    <scope>DOMAIN</scope>
    <scope>SUBCELLULAR LOCATION</scope>
</reference>
<organism>
    <name type="scientific">Sulfolobus filamentous virus 1</name>
    <name type="common">SFV1</name>
    <name type="synonym">Sulfolobus virus SFV-1</name>
    <dbReference type="NCBI Taxonomy" id="2304198"/>
    <lineage>
        <taxon>Viruses</taxon>
        <taxon>Adnaviria</taxon>
        <taxon>Zilligvirae</taxon>
        <taxon>Taleaviricota</taxon>
        <taxon>Tokiviricetes</taxon>
        <taxon>Ligamenvirales</taxon>
        <taxon>Lipothrixviridae</taxon>
        <taxon>Alphalipothrixvirus</taxon>
        <taxon>Alphalipothrixvirus beppuense</taxon>
    </lineage>
</organism>